<accession>Q9C9K3</accession>
<accession>Q0WNI9</accession>
<accession>Q56WC4</accession>
<sequence length="617" mass="67559">MDSDFGIPRELSPLQQLRSQYHPELPPCLQGTTVRVELGDGTTVAKAGDAHIIARAFPHTLGQPLAHFLRATAKVADAQIITEHPVKRVGIVFCGRQAPGGHNVVWGLYEALKVHNAKNTLLGFLGGSEGLFAQKTLEITDEVLQTYKNQGGYDMLGRTKDQIRTTEQVNAALKACTDLKLDSLVIIGGVTSNTDAAHLAEFFAEAKCSTKVVGVPVTINGDLKNQFVEANVGFDTTCKVNSQLISNICTDALSAEKYYYFVRLMGRKHSHVALECTLQSHPNMVILGEEVTASKLTIFDIIKQICDAVQARAEQDKNHGVILIPEGLVESIPELYALLKEIHGLLKEGVQVDNISTQLSSWSSALFEFLPPFIKKQLLLHPESDDSAQLSQIETEKLLAYLVETEMNKRLKEGTYKGKKFNAICHFFGYQARGSLPSKFDCDYAYVLGHVCYHILAAGLNGYMATVTNLKSPVNKWKCGAAPISAMMTVKRWSQNSGSTTIGRPVIHPASVDLKGKAYDLLRQNAQKFLMEDMYRNPGPVQYDGPGADAKAVSLCVEDQDYMGKIKKLQEYLDQVRTIVKPGCSQDVLKAALSVMASVTDVLTTISSSSTSGQQFA</sequence>
<organism>
    <name type="scientific">Arabidopsis thaliana</name>
    <name type="common">Mouse-ear cress</name>
    <dbReference type="NCBI Taxonomy" id="3702"/>
    <lineage>
        <taxon>Eukaryota</taxon>
        <taxon>Viridiplantae</taxon>
        <taxon>Streptophyta</taxon>
        <taxon>Embryophyta</taxon>
        <taxon>Tracheophyta</taxon>
        <taxon>Spermatophyta</taxon>
        <taxon>Magnoliopsida</taxon>
        <taxon>eudicotyledons</taxon>
        <taxon>Gunneridae</taxon>
        <taxon>Pentapetalae</taxon>
        <taxon>rosids</taxon>
        <taxon>malvids</taxon>
        <taxon>Brassicales</taxon>
        <taxon>Brassicaceae</taxon>
        <taxon>Camelineae</taxon>
        <taxon>Arabidopsis</taxon>
    </lineage>
</organism>
<name>PFPA2_ARATH</name>
<proteinExistence type="evidence at transcript level"/>
<protein>
    <recommendedName>
        <fullName evidence="1">Pyrophosphate--fructose 6-phosphate 1-phosphotransferase subunit alpha 2</fullName>
        <shortName evidence="1">PFP 2</shortName>
    </recommendedName>
    <alternativeName>
        <fullName evidence="1">6-phosphofructokinase, pyrophosphate dependent 2</fullName>
    </alternativeName>
    <alternativeName>
        <fullName evidence="1">PPi-PFK 2</fullName>
    </alternativeName>
    <alternativeName>
        <fullName evidence="1">Pyrophosphate-dependent 6-phosphofructose-1-kinase 2</fullName>
    </alternativeName>
</protein>
<comment type="function">
    <text evidence="1">Regulatory subunit of pyrophosphate--fructose 6-phosphate 1-phosphotransferase.</text>
</comment>
<comment type="activity regulation">
    <text evidence="1">Allosterically activated by fructose 2,6-bisphosphate.</text>
</comment>
<comment type="pathway">
    <text evidence="1">Carbohydrate degradation; glycolysis; D-glyceraldehyde 3-phosphate and glycerone phosphate from D-glucose: step 3/4.</text>
</comment>
<comment type="subunit">
    <text evidence="1">Tetramer of two alpha (regulatory) and two beta (catalytic) chains.</text>
</comment>
<comment type="subcellular location">
    <subcellularLocation>
        <location evidence="1">Cytoplasm</location>
    </subcellularLocation>
</comment>
<comment type="tissue specificity">
    <text evidence="2">Expressed in roots and specific parts such as the trichomes of leaves, cotyledon veins, as well as in stamen and gynoecium of flowers.</text>
</comment>
<comment type="similarity">
    <text evidence="1">Belongs to the phosphofructokinase type A (PFKA) family. PPi-dependent PFK group II subfamily. Clade 'Long' sub-subfamily.</text>
</comment>
<evidence type="ECO:0000255" key="1">
    <source>
        <dbReference type="HAMAP-Rule" id="MF_03185"/>
    </source>
</evidence>
<evidence type="ECO:0000269" key="2">
    <source>
    </source>
</evidence>
<evidence type="ECO:0000305" key="3"/>
<keyword id="KW-0021">Allosteric enzyme</keyword>
<keyword id="KW-0963">Cytoplasm</keyword>
<keyword id="KW-0324">Glycolysis</keyword>
<keyword id="KW-0418">Kinase</keyword>
<keyword id="KW-0460">Magnesium</keyword>
<keyword id="KW-0479">Metal-binding</keyword>
<keyword id="KW-1185">Reference proteome</keyword>
<keyword id="KW-0808">Transferase</keyword>
<dbReference type="EMBL" id="AC015450">
    <property type="protein sequence ID" value="AAG51940.1"/>
    <property type="molecule type" value="Genomic_DNA"/>
</dbReference>
<dbReference type="EMBL" id="CP002684">
    <property type="protein sequence ID" value="AEE35858.1"/>
    <property type="molecule type" value="Genomic_DNA"/>
</dbReference>
<dbReference type="EMBL" id="AK222118">
    <property type="protein sequence ID" value="BAD95089.1"/>
    <property type="molecule type" value="mRNA"/>
</dbReference>
<dbReference type="EMBL" id="AK229451">
    <property type="protein sequence ID" value="BAF01310.1"/>
    <property type="molecule type" value="mRNA"/>
</dbReference>
<dbReference type="PIR" id="E96793">
    <property type="entry name" value="E96793"/>
</dbReference>
<dbReference type="RefSeq" id="NP_177781.1">
    <property type="nucleotide sequence ID" value="NM_106305.3"/>
</dbReference>
<dbReference type="SMR" id="Q9C9K3"/>
<dbReference type="BioGRID" id="29207">
    <property type="interactions" value="7"/>
</dbReference>
<dbReference type="FunCoup" id="Q9C9K3">
    <property type="interactions" value="708"/>
</dbReference>
<dbReference type="STRING" id="3702.Q9C9K3"/>
<dbReference type="PaxDb" id="3702-AT1G76550.1"/>
<dbReference type="ProteomicsDB" id="236786"/>
<dbReference type="EnsemblPlants" id="AT1G76550.1">
    <property type="protein sequence ID" value="AT1G76550.1"/>
    <property type="gene ID" value="AT1G76550"/>
</dbReference>
<dbReference type="GeneID" id="843988"/>
<dbReference type="Gramene" id="AT1G76550.1">
    <property type="protein sequence ID" value="AT1G76550.1"/>
    <property type="gene ID" value="AT1G76550"/>
</dbReference>
<dbReference type="KEGG" id="ath:AT1G76550"/>
<dbReference type="Araport" id="AT1G76550"/>
<dbReference type="TAIR" id="AT1G76550"/>
<dbReference type="eggNOG" id="KOG2440">
    <property type="taxonomic scope" value="Eukaryota"/>
</dbReference>
<dbReference type="HOGENOM" id="CLU_022288_2_0_1"/>
<dbReference type="InParanoid" id="Q9C9K3"/>
<dbReference type="OMA" id="NKWHCGA"/>
<dbReference type="PhylomeDB" id="Q9C9K3"/>
<dbReference type="BioCyc" id="ARA:AT1G76550-MONOMER"/>
<dbReference type="UniPathway" id="UPA00109">
    <property type="reaction ID" value="UER00182"/>
</dbReference>
<dbReference type="PRO" id="PR:Q9C9K3"/>
<dbReference type="Proteomes" id="UP000006548">
    <property type="component" value="Chromosome 1"/>
</dbReference>
<dbReference type="ExpressionAtlas" id="Q9C9K3">
    <property type="expression patterns" value="baseline and differential"/>
</dbReference>
<dbReference type="GO" id="GO:0005739">
    <property type="term" value="C:mitochondrion"/>
    <property type="evidence" value="ECO:0007005"/>
    <property type="project" value="TAIR"/>
</dbReference>
<dbReference type="GO" id="GO:0003872">
    <property type="term" value="F:6-phosphofructokinase activity"/>
    <property type="evidence" value="ECO:0007669"/>
    <property type="project" value="UniProtKB-UniRule"/>
</dbReference>
<dbReference type="GO" id="GO:0005524">
    <property type="term" value="F:ATP binding"/>
    <property type="evidence" value="ECO:0007669"/>
    <property type="project" value="InterPro"/>
</dbReference>
<dbReference type="GO" id="GO:0047334">
    <property type="term" value="F:diphosphate-fructose-6-phosphate 1-phosphotransferase activity"/>
    <property type="evidence" value="ECO:0000315"/>
    <property type="project" value="TAIR"/>
</dbReference>
<dbReference type="GO" id="GO:0046872">
    <property type="term" value="F:metal ion binding"/>
    <property type="evidence" value="ECO:0007669"/>
    <property type="project" value="UniProtKB-KW"/>
</dbReference>
<dbReference type="GO" id="GO:0015979">
    <property type="term" value="P:photosynthesis"/>
    <property type="evidence" value="ECO:0000315"/>
    <property type="project" value="TAIR"/>
</dbReference>
<dbReference type="FunFam" id="1.10.10.480:FF:000001">
    <property type="entry name" value="Pyrophosphate--fructose 6-phosphate 1-phosphotransferase subunit alpha"/>
    <property type="match status" value="1"/>
</dbReference>
<dbReference type="Gene3D" id="3.40.50.450">
    <property type="match status" value="1"/>
</dbReference>
<dbReference type="Gene3D" id="3.40.50.460">
    <property type="entry name" value="Phosphofructokinase domain"/>
    <property type="match status" value="1"/>
</dbReference>
<dbReference type="Gene3D" id="1.10.10.480">
    <property type="entry name" value="Phosphofructokinase, domain 3"/>
    <property type="match status" value="1"/>
</dbReference>
<dbReference type="HAMAP" id="MF_01980">
    <property type="entry name" value="Phosphofructokinase_II_Long"/>
    <property type="match status" value="1"/>
</dbReference>
<dbReference type="InterPro" id="IPR011183">
    <property type="entry name" value="PfpB_PPi_PFK"/>
</dbReference>
<dbReference type="InterPro" id="IPR000023">
    <property type="entry name" value="Phosphofructokinase_dom"/>
</dbReference>
<dbReference type="InterPro" id="IPR035966">
    <property type="entry name" value="PKF_sf"/>
</dbReference>
<dbReference type="NCBIfam" id="TIGR02477">
    <property type="entry name" value="PFKA_PPi"/>
    <property type="match status" value="1"/>
</dbReference>
<dbReference type="NCBIfam" id="NF005482">
    <property type="entry name" value="PRK07085.1"/>
    <property type="match status" value="1"/>
</dbReference>
<dbReference type="PANTHER" id="PTHR43650">
    <property type="entry name" value="PYROPHOSPHATE--FRUCTOSE 6-PHOSPHATE 1-PHOSPHOTRANSFERASE"/>
    <property type="match status" value="1"/>
</dbReference>
<dbReference type="PANTHER" id="PTHR43650:SF23">
    <property type="entry name" value="PYROPHOSPHATE--FRUCTOSE 6-PHOSPHATE 1-PHOSPHOTRANSFERASE SUBUNIT ALPHA 2"/>
    <property type="match status" value="1"/>
</dbReference>
<dbReference type="Pfam" id="PF00365">
    <property type="entry name" value="PFK"/>
    <property type="match status" value="1"/>
</dbReference>
<dbReference type="PIRSF" id="PIRSF005677">
    <property type="entry name" value="PPi_PFK_PfpB"/>
    <property type="match status" value="1"/>
</dbReference>
<dbReference type="SUPFAM" id="SSF53784">
    <property type="entry name" value="Phosphofructokinase"/>
    <property type="match status" value="1"/>
</dbReference>
<feature type="chain" id="PRO_0000420418" description="Pyrophosphate--fructose 6-phosphate 1-phosphotransferase subunit alpha 2">
    <location>
        <begin position="1"/>
        <end position="617"/>
    </location>
</feature>
<feature type="sequence conflict" description="In Ref. 3; BAF01310." evidence="3" ref="3">
    <original>S</original>
    <variation>Y</variation>
    <location>
        <position position="387"/>
    </location>
</feature>
<reference key="1">
    <citation type="journal article" date="2000" name="Nature">
        <title>Sequence and analysis of chromosome 1 of the plant Arabidopsis thaliana.</title>
        <authorList>
            <person name="Theologis A."/>
            <person name="Ecker J.R."/>
            <person name="Palm C.J."/>
            <person name="Federspiel N.A."/>
            <person name="Kaul S."/>
            <person name="White O."/>
            <person name="Alonso J."/>
            <person name="Altafi H."/>
            <person name="Araujo R."/>
            <person name="Bowman C.L."/>
            <person name="Brooks S.Y."/>
            <person name="Buehler E."/>
            <person name="Chan A."/>
            <person name="Chao Q."/>
            <person name="Chen H."/>
            <person name="Cheuk R.F."/>
            <person name="Chin C.W."/>
            <person name="Chung M.K."/>
            <person name="Conn L."/>
            <person name="Conway A.B."/>
            <person name="Conway A.R."/>
            <person name="Creasy T.H."/>
            <person name="Dewar K."/>
            <person name="Dunn P."/>
            <person name="Etgu P."/>
            <person name="Feldblyum T.V."/>
            <person name="Feng J.-D."/>
            <person name="Fong B."/>
            <person name="Fujii C.Y."/>
            <person name="Gill J.E."/>
            <person name="Goldsmith A.D."/>
            <person name="Haas B."/>
            <person name="Hansen N.F."/>
            <person name="Hughes B."/>
            <person name="Huizar L."/>
            <person name="Hunter J.L."/>
            <person name="Jenkins J."/>
            <person name="Johnson-Hopson C."/>
            <person name="Khan S."/>
            <person name="Khaykin E."/>
            <person name="Kim C.J."/>
            <person name="Koo H.L."/>
            <person name="Kremenetskaia I."/>
            <person name="Kurtz D.B."/>
            <person name="Kwan A."/>
            <person name="Lam B."/>
            <person name="Langin-Hooper S."/>
            <person name="Lee A."/>
            <person name="Lee J.M."/>
            <person name="Lenz C.A."/>
            <person name="Li J.H."/>
            <person name="Li Y.-P."/>
            <person name="Lin X."/>
            <person name="Liu S.X."/>
            <person name="Liu Z.A."/>
            <person name="Luros J.S."/>
            <person name="Maiti R."/>
            <person name="Marziali A."/>
            <person name="Militscher J."/>
            <person name="Miranda M."/>
            <person name="Nguyen M."/>
            <person name="Nierman W.C."/>
            <person name="Osborne B.I."/>
            <person name="Pai G."/>
            <person name="Peterson J."/>
            <person name="Pham P.K."/>
            <person name="Rizzo M."/>
            <person name="Rooney T."/>
            <person name="Rowley D."/>
            <person name="Sakano H."/>
            <person name="Salzberg S.L."/>
            <person name="Schwartz J.R."/>
            <person name="Shinn P."/>
            <person name="Southwick A.M."/>
            <person name="Sun H."/>
            <person name="Tallon L.J."/>
            <person name="Tambunga G."/>
            <person name="Toriumi M.J."/>
            <person name="Town C.D."/>
            <person name="Utterback T."/>
            <person name="Van Aken S."/>
            <person name="Vaysberg M."/>
            <person name="Vysotskaia V.S."/>
            <person name="Walker M."/>
            <person name="Wu D."/>
            <person name="Yu G."/>
            <person name="Fraser C.M."/>
            <person name="Venter J.C."/>
            <person name="Davis R.W."/>
        </authorList>
    </citation>
    <scope>NUCLEOTIDE SEQUENCE [LARGE SCALE GENOMIC DNA]</scope>
    <source>
        <strain>cv. Columbia</strain>
    </source>
</reference>
<reference key="2">
    <citation type="journal article" date="2017" name="Plant J.">
        <title>Araport11: a complete reannotation of the Arabidopsis thaliana reference genome.</title>
        <authorList>
            <person name="Cheng C.Y."/>
            <person name="Krishnakumar V."/>
            <person name="Chan A.P."/>
            <person name="Thibaud-Nissen F."/>
            <person name="Schobel S."/>
            <person name="Town C.D."/>
        </authorList>
    </citation>
    <scope>GENOME REANNOTATION</scope>
    <source>
        <strain>cv. Columbia</strain>
    </source>
</reference>
<reference key="3">
    <citation type="submission" date="2006-07" db="EMBL/GenBank/DDBJ databases">
        <title>Large-scale analysis of RIKEN Arabidopsis full-length (RAFL) cDNAs.</title>
        <authorList>
            <person name="Totoki Y."/>
            <person name="Seki M."/>
            <person name="Ishida J."/>
            <person name="Nakajima M."/>
            <person name="Enju A."/>
            <person name="Kamiya A."/>
            <person name="Narusaka M."/>
            <person name="Shin-i T."/>
            <person name="Nakagawa M."/>
            <person name="Sakamoto N."/>
            <person name="Oishi K."/>
            <person name="Kohara Y."/>
            <person name="Kobayashi M."/>
            <person name="Toyoda A."/>
            <person name="Sakaki Y."/>
            <person name="Sakurai T."/>
            <person name="Iida K."/>
            <person name="Akiyama K."/>
            <person name="Satou M."/>
            <person name="Toyoda T."/>
            <person name="Konagaya A."/>
            <person name="Carninci P."/>
            <person name="Kawai J."/>
            <person name="Hayashizaki Y."/>
            <person name="Shinozaki K."/>
        </authorList>
    </citation>
    <scope>NUCLEOTIDE SEQUENCE [LARGE SCALE MRNA]</scope>
    <source>
        <strain>cv. Columbia</strain>
    </source>
</reference>
<reference key="4">
    <citation type="journal article" date="2004" name="Trends Plant Sci.">
        <title>Fructose-2,6-bisphosphate: a traffic signal in plant metabolism.</title>
        <authorList>
            <person name="Nielsen T.H."/>
            <person name="Rung J.H."/>
            <person name="Villadsen D."/>
        </authorList>
    </citation>
    <scope>REVIEW</scope>
</reference>
<reference key="5">
    <citation type="journal article" date="2007" name="Plant Cell Rep.">
        <title>Identification of a 20-bp regulatory element of the Arabidopsis pyrophosphate:fructose-6-phosphate 1-phosphotransferase alpha2 gene that is essential for expression.</title>
        <authorList>
            <person name="Lim H.-M."/>
            <person name="Cho J.-I."/>
            <person name="Lee S."/>
            <person name="Cho M.-H."/>
            <person name="Bhoo S.H."/>
            <person name="An G."/>
            <person name="Hahn T.-R."/>
            <person name="Jeon J.-S."/>
        </authorList>
    </citation>
    <scope>TISSUE SPECIFICITY</scope>
    <source>
        <strain>cv. Columbia</strain>
    </source>
</reference>
<reference key="6">
    <citation type="journal article" date="2009" name="Mol. Cells">
        <title>Altered expression of pyrophosphate: fructose-6-phosphate 1-phosphotransferase affects the growth of transgenic Arabidopsis plants.</title>
        <authorList>
            <person name="Lim H."/>
            <person name="Cho M.-H."/>
            <person name="Jeon J.-S."/>
            <person name="Bhoo S.H."/>
            <person name="Kwon Y.-K."/>
            <person name="Hahn T.-R."/>
        </authorList>
    </citation>
    <scope>GENE FAMILY</scope>
    <scope>NOMENCLATURE</scope>
    <source>
        <strain>cv. Columbia</strain>
    </source>
</reference>
<gene>
    <name evidence="1" type="primary">PFP-ALPHA2</name>
    <name type="ordered locus">At1g76550</name>
    <name type="ORF">F14G6.15</name>
</gene>